<feature type="chain" id="PRO_0000294049" description="Coproheme decarboxylase">
    <location>
        <begin position="1"/>
        <end position="250"/>
    </location>
</feature>
<feature type="active site" evidence="1">
    <location>
        <position position="145"/>
    </location>
</feature>
<feature type="binding site" evidence="1">
    <location>
        <position position="131"/>
    </location>
    <ligand>
        <name>Fe-coproporphyrin III</name>
        <dbReference type="ChEBI" id="CHEBI:68438"/>
    </ligand>
</feature>
<feature type="binding site" evidence="1">
    <location>
        <begin position="145"/>
        <end position="149"/>
    </location>
    <ligand>
        <name>Fe-coproporphyrin III</name>
        <dbReference type="ChEBI" id="CHEBI:68438"/>
    </ligand>
</feature>
<feature type="binding site" description="axial binding residue" evidence="1">
    <location>
        <position position="172"/>
    </location>
    <ligand>
        <name>Fe-coproporphyrin III</name>
        <dbReference type="ChEBI" id="CHEBI:68438"/>
    </ligand>
    <ligandPart>
        <name>Fe</name>
        <dbReference type="ChEBI" id="CHEBI:18248"/>
    </ligandPart>
</feature>
<feature type="binding site" evidence="1">
    <location>
        <position position="185"/>
    </location>
    <ligand>
        <name>Fe-coproporphyrin III</name>
        <dbReference type="ChEBI" id="CHEBI:68438"/>
    </ligand>
</feature>
<gene>
    <name evidence="1" type="primary">chdC</name>
    <name type="ordered locus">SAV0587</name>
</gene>
<name>CHDC_STAAM</name>
<accession>Q99W24</accession>
<organism>
    <name type="scientific">Staphylococcus aureus (strain Mu50 / ATCC 700699)</name>
    <dbReference type="NCBI Taxonomy" id="158878"/>
    <lineage>
        <taxon>Bacteria</taxon>
        <taxon>Bacillati</taxon>
        <taxon>Bacillota</taxon>
        <taxon>Bacilli</taxon>
        <taxon>Bacillales</taxon>
        <taxon>Staphylococcaceae</taxon>
        <taxon>Staphylococcus</taxon>
    </lineage>
</organism>
<proteinExistence type="inferred from homology"/>
<protein>
    <recommendedName>
        <fullName evidence="1">Coproheme decarboxylase</fullName>
        <ecNumber evidence="1">1.3.98.5</ecNumber>
    </recommendedName>
    <alternativeName>
        <fullName evidence="1">Coproheme III oxidative decarboxylase</fullName>
    </alternativeName>
    <alternativeName>
        <fullName evidence="1">Hydrogen peroxide-dependent heme synthase</fullName>
    </alternativeName>
</protein>
<comment type="function">
    <text evidence="1">Involved in coproporphyrin-dependent heme b biosynthesis. Catalyzes the decarboxylation of Fe-coproporphyrin III (coproheme) to heme b (protoheme IX), the last step of the pathway. The reaction occurs in a stepwise manner with a three-propionate intermediate.</text>
</comment>
<comment type="catalytic activity">
    <reaction evidence="1">
        <text>Fe-coproporphyrin III + 2 H2O2 + 2 H(+) = heme b + 2 CO2 + 4 H2O</text>
        <dbReference type="Rhea" id="RHEA:56516"/>
        <dbReference type="ChEBI" id="CHEBI:15377"/>
        <dbReference type="ChEBI" id="CHEBI:15378"/>
        <dbReference type="ChEBI" id="CHEBI:16240"/>
        <dbReference type="ChEBI" id="CHEBI:16526"/>
        <dbReference type="ChEBI" id="CHEBI:60344"/>
        <dbReference type="ChEBI" id="CHEBI:68438"/>
        <dbReference type="EC" id="1.3.98.5"/>
    </reaction>
    <physiologicalReaction direction="left-to-right" evidence="1">
        <dbReference type="Rhea" id="RHEA:56517"/>
    </physiologicalReaction>
</comment>
<comment type="catalytic activity">
    <reaction evidence="1">
        <text>Fe-coproporphyrin III + H2O2 + H(+) = harderoheme III + CO2 + 2 H2O</text>
        <dbReference type="Rhea" id="RHEA:57940"/>
        <dbReference type="ChEBI" id="CHEBI:15377"/>
        <dbReference type="ChEBI" id="CHEBI:15378"/>
        <dbReference type="ChEBI" id="CHEBI:16240"/>
        <dbReference type="ChEBI" id="CHEBI:16526"/>
        <dbReference type="ChEBI" id="CHEBI:68438"/>
        <dbReference type="ChEBI" id="CHEBI:142463"/>
    </reaction>
    <physiologicalReaction direction="left-to-right" evidence="1">
        <dbReference type="Rhea" id="RHEA:57941"/>
    </physiologicalReaction>
</comment>
<comment type="catalytic activity">
    <reaction evidence="1">
        <text>harderoheme III + H2O2 + H(+) = heme b + CO2 + 2 H2O</text>
        <dbReference type="Rhea" id="RHEA:57944"/>
        <dbReference type="ChEBI" id="CHEBI:15377"/>
        <dbReference type="ChEBI" id="CHEBI:15378"/>
        <dbReference type="ChEBI" id="CHEBI:16240"/>
        <dbReference type="ChEBI" id="CHEBI:16526"/>
        <dbReference type="ChEBI" id="CHEBI:60344"/>
        <dbReference type="ChEBI" id="CHEBI:142463"/>
    </reaction>
    <physiologicalReaction direction="left-to-right" evidence="1">
        <dbReference type="Rhea" id="RHEA:57945"/>
    </physiologicalReaction>
</comment>
<comment type="cofactor">
    <cofactor evidence="1">
        <name>Fe-coproporphyrin III</name>
        <dbReference type="ChEBI" id="CHEBI:68438"/>
    </cofactor>
    <text evidence="1">Fe-coproporphyrin III acts both as a substrate and a redox cofactor.</text>
</comment>
<comment type="pathway">
    <text evidence="1">Porphyrin-containing compound metabolism; protoheme biosynthesis.</text>
</comment>
<comment type="similarity">
    <text evidence="1">Belongs to the ChdC family. Type 1 subfamily.</text>
</comment>
<dbReference type="EC" id="1.3.98.5" evidence="1"/>
<dbReference type="EMBL" id="BA000017">
    <property type="protein sequence ID" value="BAB56749.1"/>
    <property type="molecule type" value="Genomic_DNA"/>
</dbReference>
<dbReference type="SMR" id="Q99W24"/>
<dbReference type="KEGG" id="sav:SAV0587"/>
<dbReference type="HOGENOM" id="CLU_063226_1_0_9"/>
<dbReference type="PhylomeDB" id="Q99W24"/>
<dbReference type="UniPathway" id="UPA00252"/>
<dbReference type="Proteomes" id="UP000002481">
    <property type="component" value="Chromosome"/>
</dbReference>
<dbReference type="GO" id="GO:0020037">
    <property type="term" value="F:heme binding"/>
    <property type="evidence" value="ECO:0007669"/>
    <property type="project" value="InterPro"/>
</dbReference>
<dbReference type="GO" id="GO:0046872">
    <property type="term" value="F:metal ion binding"/>
    <property type="evidence" value="ECO:0007669"/>
    <property type="project" value="UniProtKB-KW"/>
</dbReference>
<dbReference type="GO" id="GO:0016634">
    <property type="term" value="F:oxidoreductase activity, acting on the CH-CH group of donors, oxygen as acceptor"/>
    <property type="evidence" value="ECO:0007669"/>
    <property type="project" value="UniProtKB-UniRule"/>
</dbReference>
<dbReference type="GO" id="GO:0004601">
    <property type="term" value="F:peroxidase activity"/>
    <property type="evidence" value="ECO:0007669"/>
    <property type="project" value="InterPro"/>
</dbReference>
<dbReference type="GO" id="GO:0006785">
    <property type="term" value="P:heme B biosynthetic process"/>
    <property type="evidence" value="ECO:0007669"/>
    <property type="project" value="UniProtKB-UniRule"/>
</dbReference>
<dbReference type="Gene3D" id="3.30.70.1030">
    <property type="entry name" value="Apc35880, domain 1"/>
    <property type="match status" value="2"/>
</dbReference>
<dbReference type="HAMAP" id="MF_01442">
    <property type="entry name" value="Coproheme_decarbox_1"/>
    <property type="match status" value="1"/>
</dbReference>
<dbReference type="InterPro" id="IPR031332">
    <property type="entry name" value="CHDC"/>
</dbReference>
<dbReference type="InterPro" id="IPR010644">
    <property type="entry name" value="ChdC/CLD"/>
</dbReference>
<dbReference type="InterPro" id="IPR011008">
    <property type="entry name" value="Dimeric_a/b-barrel"/>
</dbReference>
<dbReference type="NCBIfam" id="NF008913">
    <property type="entry name" value="PRK12276.1"/>
    <property type="match status" value="1"/>
</dbReference>
<dbReference type="PANTHER" id="PTHR36843:SF1">
    <property type="entry name" value="COPROHEME DECARBOXYLASE"/>
    <property type="match status" value="1"/>
</dbReference>
<dbReference type="PANTHER" id="PTHR36843">
    <property type="entry name" value="HEME-DEPENDENT PEROXIDASE YWFI-RELATED"/>
    <property type="match status" value="1"/>
</dbReference>
<dbReference type="Pfam" id="PF06778">
    <property type="entry name" value="Chlor_dismutase"/>
    <property type="match status" value="1"/>
</dbReference>
<dbReference type="SUPFAM" id="SSF54909">
    <property type="entry name" value="Dimeric alpha+beta barrel"/>
    <property type="match status" value="1"/>
</dbReference>
<evidence type="ECO:0000255" key="1">
    <source>
        <dbReference type="HAMAP-Rule" id="MF_01442"/>
    </source>
</evidence>
<reference key="1">
    <citation type="journal article" date="2001" name="Lancet">
        <title>Whole genome sequencing of meticillin-resistant Staphylococcus aureus.</title>
        <authorList>
            <person name="Kuroda M."/>
            <person name="Ohta T."/>
            <person name="Uchiyama I."/>
            <person name="Baba T."/>
            <person name="Yuzawa H."/>
            <person name="Kobayashi I."/>
            <person name="Cui L."/>
            <person name="Oguchi A."/>
            <person name="Aoki K."/>
            <person name="Nagai Y."/>
            <person name="Lian J.-Q."/>
            <person name="Ito T."/>
            <person name="Kanamori M."/>
            <person name="Matsumaru H."/>
            <person name="Maruyama A."/>
            <person name="Murakami H."/>
            <person name="Hosoyama A."/>
            <person name="Mizutani-Ui Y."/>
            <person name="Takahashi N.K."/>
            <person name="Sawano T."/>
            <person name="Inoue R."/>
            <person name="Kaito C."/>
            <person name="Sekimizu K."/>
            <person name="Hirakawa H."/>
            <person name="Kuhara S."/>
            <person name="Goto S."/>
            <person name="Yabuzaki J."/>
            <person name="Kanehisa M."/>
            <person name="Yamashita A."/>
            <person name="Oshima K."/>
            <person name="Furuya K."/>
            <person name="Yoshino C."/>
            <person name="Shiba T."/>
            <person name="Hattori M."/>
            <person name="Ogasawara N."/>
            <person name="Hayashi H."/>
            <person name="Hiramatsu K."/>
        </authorList>
    </citation>
    <scope>NUCLEOTIDE SEQUENCE [LARGE SCALE GENOMIC DNA]</scope>
    <source>
        <strain>Mu50 / ATCC 700699</strain>
    </source>
</reference>
<keyword id="KW-0349">Heme</keyword>
<keyword id="KW-0350">Heme biosynthesis</keyword>
<keyword id="KW-0408">Iron</keyword>
<keyword id="KW-0479">Metal-binding</keyword>
<keyword id="KW-0560">Oxidoreductase</keyword>
<sequence>MSQAAETLDGWYSLHLFYAVDWASLRIVPKDERDALVTEFQSFLENTATVRSSKSGDQAIYNITGQKADLLLWFLRPEMKSLNHIENEFNKLRIADFLIPTYSYVSVIELSNYLAGKSDEDPYENPHIKARLYPELPHSDYICFYPMNKRRNETYNWYMLTMEERQKLMYDHGMIGRKYAGKIKQFITGSVGFDDFEWGVTLFSDDVLQFKKIVYEMRFDETTARYGEFGSFFVGHLINTNEFDQFFAIS</sequence>